<sequence>MSDNDELQQIAHLRREYTKGGLRRRDLPADPLTLFERWLSQACEAKLADPTAMVVATVDENGQPYQRIVLLKHYDEKGMVFYTNLGSRKAHQIESNPRVSLLFPWHTLERQVMVTGKAERLSTLEVVKYFHSRPRDSQIGAWVSKQSSRISARGILESKFLELKQKFQQGEVPLPSFWGGFRVSMEQIEFWQGGEHRLHDRFLYQRENDAWKIDRLAP</sequence>
<reference key="1">
    <citation type="journal article" date="2009" name="PLoS Genet.">
        <title>Organised genome dynamics in the Escherichia coli species results in highly diverse adaptive paths.</title>
        <authorList>
            <person name="Touchon M."/>
            <person name="Hoede C."/>
            <person name="Tenaillon O."/>
            <person name="Barbe V."/>
            <person name="Baeriswyl S."/>
            <person name="Bidet P."/>
            <person name="Bingen E."/>
            <person name="Bonacorsi S."/>
            <person name="Bouchier C."/>
            <person name="Bouvet O."/>
            <person name="Calteau A."/>
            <person name="Chiapello H."/>
            <person name="Clermont O."/>
            <person name="Cruveiller S."/>
            <person name="Danchin A."/>
            <person name="Diard M."/>
            <person name="Dossat C."/>
            <person name="Karoui M.E."/>
            <person name="Frapy E."/>
            <person name="Garry L."/>
            <person name="Ghigo J.M."/>
            <person name="Gilles A.M."/>
            <person name="Johnson J."/>
            <person name="Le Bouguenec C."/>
            <person name="Lescat M."/>
            <person name="Mangenot S."/>
            <person name="Martinez-Jehanne V."/>
            <person name="Matic I."/>
            <person name="Nassif X."/>
            <person name="Oztas S."/>
            <person name="Petit M.A."/>
            <person name="Pichon C."/>
            <person name="Rouy Z."/>
            <person name="Ruf C.S."/>
            <person name="Schneider D."/>
            <person name="Tourret J."/>
            <person name="Vacherie B."/>
            <person name="Vallenet D."/>
            <person name="Medigue C."/>
            <person name="Rocha E.P.C."/>
            <person name="Denamur E."/>
        </authorList>
    </citation>
    <scope>NUCLEOTIDE SEQUENCE [LARGE SCALE GENOMIC DNA]</scope>
    <source>
        <strain>ATCC 35469 / DSM 13698 / BCRC 15582 / CCUG 18766 / IAM 14443 / JCM 21226 / LMG 7866 / NBRC 102419 / NCTC 12128 / CDC 0568-73</strain>
    </source>
</reference>
<protein>
    <recommendedName>
        <fullName evidence="1">Pyridoxine/pyridoxamine 5'-phosphate oxidase</fullName>
        <ecNumber evidence="1">1.4.3.5</ecNumber>
    </recommendedName>
    <alternativeName>
        <fullName evidence="1">PNP/PMP oxidase</fullName>
        <shortName evidence="1">PNPOx</shortName>
    </alternativeName>
    <alternativeName>
        <fullName evidence="1">Pyridoxal 5'-phosphate synthase</fullName>
    </alternativeName>
</protein>
<accession>B7LQN2</accession>
<evidence type="ECO:0000255" key="1">
    <source>
        <dbReference type="HAMAP-Rule" id="MF_01629"/>
    </source>
</evidence>
<organism>
    <name type="scientific">Escherichia fergusonii (strain ATCC 35469 / DSM 13698 / CCUG 18766 / IAM 14443 / JCM 21226 / LMG 7866 / NBRC 102419 / NCTC 12128 / CDC 0568-73)</name>
    <dbReference type="NCBI Taxonomy" id="585054"/>
    <lineage>
        <taxon>Bacteria</taxon>
        <taxon>Pseudomonadati</taxon>
        <taxon>Pseudomonadota</taxon>
        <taxon>Gammaproteobacteria</taxon>
        <taxon>Enterobacterales</taxon>
        <taxon>Enterobacteriaceae</taxon>
        <taxon>Escherichia</taxon>
    </lineage>
</organism>
<feature type="chain" id="PRO_1000186316" description="Pyridoxine/pyridoxamine 5'-phosphate oxidase">
    <location>
        <begin position="1"/>
        <end position="218"/>
    </location>
</feature>
<feature type="binding site" evidence="1">
    <location>
        <begin position="14"/>
        <end position="17"/>
    </location>
    <ligand>
        <name>substrate</name>
    </ligand>
</feature>
<feature type="binding site" evidence="1">
    <location>
        <begin position="67"/>
        <end position="72"/>
    </location>
    <ligand>
        <name>FMN</name>
        <dbReference type="ChEBI" id="CHEBI:58210"/>
    </ligand>
</feature>
<feature type="binding site" evidence="1">
    <location>
        <position position="72"/>
    </location>
    <ligand>
        <name>substrate</name>
    </ligand>
</feature>
<feature type="binding site" evidence="1">
    <location>
        <begin position="82"/>
        <end position="83"/>
    </location>
    <ligand>
        <name>FMN</name>
        <dbReference type="ChEBI" id="CHEBI:58210"/>
    </ligand>
</feature>
<feature type="binding site" evidence="1">
    <location>
        <position position="88"/>
    </location>
    <ligand>
        <name>FMN</name>
        <dbReference type="ChEBI" id="CHEBI:58210"/>
    </ligand>
</feature>
<feature type="binding site" evidence="1">
    <location>
        <position position="89"/>
    </location>
    <ligand>
        <name>FMN</name>
        <dbReference type="ChEBI" id="CHEBI:58210"/>
    </ligand>
</feature>
<feature type="binding site" evidence="1">
    <location>
        <position position="111"/>
    </location>
    <ligand>
        <name>FMN</name>
        <dbReference type="ChEBI" id="CHEBI:58210"/>
    </ligand>
</feature>
<feature type="binding site" evidence="1">
    <location>
        <position position="129"/>
    </location>
    <ligand>
        <name>substrate</name>
    </ligand>
</feature>
<feature type="binding site" evidence="1">
    <location>
        <position position="133"/>
    </location>
    <ligand>
        <name>substrate</name>
    </ligand>
</feature>
<feature type="binding site" evidence="1">
    <location>
        <position position="137"/>
    </location>
    <ligand>
        <name>substrate</name>
    </ligand>
</feature>
<feature type="binding site" evidence="1">
    <location>
        <begin position="146"/>
        <end position="147"/>
    </location>
    <ligand>
        <name>FMN</name>
        <dbReference type="ChEBI" id="CHEBI:58210"/>
    </ligand>
</feature>
<feature type="binding site" evidence="1">
    <location>
        <position position="191"/>
    </location>
    <ligand>
        <name>FMN</name>
        <dbReference type="ChEBI" id="CHEBI:58210"/>
    </ligand>
</feature>
<feature type="binding site" evidence="1">
    <location>
        <begin position="197"/>
        <end position="199"/>
    </location>
    <ligand>
        <name>substrate</name>
    </ligand>
</feature>
<feature type="binding site" evidence="1">
    <location>
        <position position="201"/>
    </location>
    <ligand>
        <name>FMN</name>
        <dbReference type="ChEBI" id="CHEBI:58210"/>
    </ligand>
</feature>
<comment type="function">
    <text evidence="1">Catalyzes the oxidation of either pyridoxine 5'-phosphate (PNP) or pyridoxamine 5'-phosphate (PMP) into pyridoxal 5'-phosphate (PLP).</text>
</comment>
<comment type="catalytic activity">
    <reaction evidence="1">
        <text>pyridoxamine 5'-phosphate + O2 + H2O = pyridoxal 5'-phosphate + H2O2 + NH4(+)</text>
        <dbReference type="Rhea" id="RHEA:15817"/>
        <dbReference type="ChEBI" id="CHEBI:15377"/>
        <dbReference type="ChEBI" id="CHEBI:15379"/>
        <dbReference type="ChEBI" id="CHEBI:16240"/>
        <dbReference type="ChEBI" id="CHEBI:28938"/>
        <dbReference type="ChEBI" id="CHEBI:58451"/>
        <dbReference type="ChEBI" id="CHEBI:597326"/>
        <dbReference type="EC" id="1.4.3.5"/>
    </reaction>
</comment>
<comment type="catalytic activity">
    <reaction evidence="1">
        <text>pyridoxine 5'-phosphate + O2 = pyridoxal 5'-phosphate + H2O2</text>
        <dbReference type="Rhea" id="RHEA:15149"/>
        <dbReference type="ChEBI" id="CHEBI:15379"/>
        <dbReference type="ChEBI" id="CHEBI:16240"/>
        <dbReference type="ChEBI" id="CHEBI:58589"/>
        <dbReference type="ChEBI" id="CHEBI:597326"/>
        <dbReference type="EC" id="1.4.3.5"/>
    </reaction>
</comment>
<comment type="cofactor">
    <cofactor evidence="1">
        <name>FMN</name>
        <dbReference type="ChEBI" id="CHEBI:58210"/>
    </cofactor>
    <text evidence="1">Binds 1 FMN per subunit.</text>
</comment>
<comment type="pathway">
    <text evidence="1">Cofactor metabolism; pyridoxal 5'-phosphate salvage; pyridoxal 5'-phosphate from pyridoxamine 5'-phosphate: step 1/1.</text>
</comment>
<comment type="pathway">
    <text evidence="1">Cofactor metabolism; pyridoxal 5'-phosphate salvage; pyridoxal 5'-phosphate from pyridoxine 5'-phosphate: step 1/1.</text>
</comment>
<comment type="subunit">
    <text evidence="1">Homodimer.</text>
</comment>
<comment type="similarity">
    <text evidence="1">Belongs to the pyridoxamine 5'-phosphate oxidase family.</text>
</comment>
<name>PDXH_ESCF3</name>
<gene>
    <name evidence="1" type="primary">pdxH</name>
    <name type="ordered locus">EFER_1405</name>
</gene>
<proteinExistence type="inferred from homology"/>
<keyword id="KW-0285">Flavoprotein</keyword>
<keyword id="KW-0288">FMN</keyword>
<keyword id="KW-0560">Oxidoreductase</keyword>
<keyword id="KW-0664">Pyridoxine biosynthesis</keyword>
<dbReference type="EC" id="1.4.3.5" evidence="1"/>
<dbReference type="EMBL" id="CU928158">
    <property type="protein sequence ID" value="CAQ88925.1"/>
    <property type="molecule type" value="Genomic_DNA"/>
</dbReference>
<dbReference type="RefSeq" id="WP_015953371.1">
    <property type="nucleotide sequence ID" value="NC_011740.1"/>
</dbReference>
<dbReference type="SMR" id="B7LQN2"/>
<dbReference type="GeneID" id="75057549"/>
<dbReference type="KEGG" id="efe:EFER_1405"/>
<dbReference type="HOGENOM" id="CLU_032263_2_2_6"/>
<dbReference type="OrthoDB" id="9780392at2"/>
<dbReference type="UniPathway" id="UPA01068">
    <property type="reaction ID" value="UER00304"/>
</dbReference>
<dbReference type="UniPathway" id="UPA01068">
    <property type="reaction ID" value="UER00305"/>
</dbReference>
<dbReference type="Proteomes" id="UP000000745">
    <property type="component" value="Chromosome"/>
</dbReference>
<dbReference type="GO" id="GO:0010181">
    <property type="term" value="F:FMN binding"/>
    <property type="evidence" value="ECO:0007669"/>
    <property type="project" value="UniProtKB-UniRule"/>
</dbReference>
<dbReference type="GO" id="GO:0004733">
    <property type="term" value="F:pyridoxamine phosphate oxidase activity"/>
    <property type="evidence" value="ECO:0007669"/>
    <property type="project" value="UniProtKB-UniRule"/>
</dbReference>
<dbReference type="GO" id="GO:0008615">
    <property type="term" value="P:pyridoxine biosynthetic process"/>
    <property type="evidence" value="ECO:0007669"/>
    <property type="project" value="UniProtKB-KW"/>
</dbReference>
<dbReference type="FunFam" id="2.30.110.10:FF:000001">
    <property type="entry name" value="Pyridoxine/pyridoxamine 5'-phosphate oxidase"/>
    <property type="match status" value="1"/>
</dbReference>
<dbReference type="Gene3D" id="2.30.110.10">
    <property type="entry name" value="Electron Transport, Fmn-binding Protein, Chain A"/>
    <property type="match status" value="1"/>
</dbReference>
<dbReference type="HAMAP" id="MF_01629">
    <property type="entry name" value="PdxH"/>
    <property type="match status" value="1"/>
</dbReference>
<dbReference type="InterPro" id="IPR000659">
    <property type="entry name" value="Pyridox_Oxase"/>
</dbReference>
<dbReference type="InterPro" id="IPR019740">
    <property type="entry name" value="Pyridox_Oxase_CS"/>
</dbReference>
<dbReference type="InterPro" id="IPR011576">
    <property type="entry name" value="Pyridox_Oxase_N"/>
</dbReference>
<dbReference type="InterPro" id="IPR019576">
    <property type="entry name" value="Pyridoxamine_oxidase_dimer_C"/>
</dbReference>
<dbReference type="InterPro" id="IPR012349">
    <property type="entry name" value="Split_barrel_FMN-bd"/>
</dbReference>
<dbReference type="NCBIfam" id="TIGR00558">
    <property type="entry name" value="pdxH"/>
    <property type="match status" value="1"/>
</dbReference>
<dbReference type="NCBIfam" id="NF004231">
    <property type="entry name" value="PRK05679.1"/>
    <property type="match status" value="1"/>
</dbReference>
<dbReference type="PANTHER" id="PTHR10851:SF0">
    <property type="entry name" value="PYRIDOXINE-5'-PHOSPHATE OXIDASE"/>
    <property type="match status" value="1"/>
</dbReference>
<dbReference type="PANTHER" id="PTHR10851">
    <property type="entry name" value="PYRIDOXINE-5-PHOSPHATE OXIDASE"/>
    <property type="match status" value="1"/>
</dbReference>
<dbReference type="Pfam" id="PF10590">
    <property type="entry name" value="PNP_phzG_C"/>
    <property type="match status" value="1"/>
</dbReference>
<dbReference type="Pfam" id="PF01243">
    <property type="entry name" value="PNPOx_N"/>
    <property type="match status" value="1"/>
</dbReference>
<dbReference type="PIRSF" id="PIRSF000190">
    <property type="entry name" value="Pyd_amn-ph_oxd"/>
    <property type="match status" value="1"/>
</dbReference>
<dbReference type="SUPFAM" id="SSF50475">
    <property type="entry name" value="FMN-binding split barrel"/>
    <property type="match status" value="1"/>
</dbReference>
<dbReference type="PROSITE" id="PS01064">
    <property type="entry name" value="PYRIDOX_OXIDASE"/>
    <property type="match status" value="1"/>
</dbReference>